<accession>Q21CY5</accession>
<organism>
    <name type="scientific">Rhodopseudomonas palustris (strain BisB18)</name>
    <dbReference type="NCBI Taxonomy" id="316056"/>
    <lineage>
        <taxon>Bacteria</taxon>
        <taxon>Pseudomonadati</taxon>
        <taxon>Pseudomonadota</taxon>
        <taxon>Alphaproteobacteria</taxon>
        <taxon>Hyphomicrobiales</taxon>
        <taxon>Nitrobacteraceae</taxon>
        <taxon>Rhodopseudomonas</taxon>
    </lineage>
</organism>
<evidence type="ECO:0000250" key="1"/>
<evidence type="ECO:0000255" key="2">
    <source>
        <dbReference type="HAMAP-Rule" id="MF_01346"/>
    </source>
</evidence>
<name>ATPA_RHOPB</name>
<comment type="function">
    <text evidence="2">Produces ATP from ADP in the presence of a proton gradient across the membrane. The alpha chain is a regulatory subunit.</text>
</comment>
<comment type="catalytic activity">
    <reaction evidence="2">
        <text>ATP + H2O + 4 H(+)(in) = ADP + phosphate + 5 H(+)(out)</text>
        <dbReference type="Rhea" id="RHEA:57720"/>
        <dbReference type="ChEBI" id="CHEBI:15377"/>
        <dbReference type="ChEBI" id="CHEBI:15378"/>
        <dbReference type="ChEBI" id="CHEBI:30616"/>
        <dbReference type="ChEBI" id="CHEBI:43474"/>
        <dbReference type="ChEBI" id="CHEBI:456216"/>
        <dbReference type="EC" id="7.1.2.2"/>
    </reaction>
</comment>
<comment type="subunit">
    <text evidence="1">F-type ATPases have 2 components, CF(1) - the catalytic core - and CF(0) - the membrane proton channel. CF(1) has five subunits: alpha(3), beta(3), gamma(1), delta(1), epsilon(1). CF(0) has four main subunits: a(1), b(1), b'(1) and c(9-12) (By similarity).</text>
</comment>
<comment type="subcellular location">
    <subcellularLocation>
        <location evidence="2">Cell inner membrane</location>
        <topology evidence="2">Peripheral membrane protein</topology>
    </subcellularLocation>
</comment>
<comment type="similarity">
    <text evidence="2">Belongs to the ATPase alpha/beta chains family.</text>
</comment>
<proteinExistence type="inferred from homology"/>
<keyword id="KW-0066">ATP synthesis</keyword>
<keyword id="KW-0067">ATP-binding</keyword>
<keyword id="KW-0997">Cell inner membrane</keyword>
<keyword id="KW-1003">Cell membrane</keyword>
<keyword id="KW-0139">CF(1)</keyword>
<keyword id="KW-0375">Hydrogen ion transport</keyword>
<keyword id="KW-0406">Ion transport</keyword>
<keyword id="KW-0472">Membrane</keyword>
<keyword id="KW-0547">Nucleotide-binding</keyword>
<keyword id="KW-1278">Translocase</keyword>
<keyword id="KW-0813">Transport</keyword>
<feature type="chain" id="PRO_0000256107" description="ATP synthase subunit alpha">
    <location>
        <begin position="1"/>
        <end position="510"/>
    </location>
</feature>
<feature type="binding site" evidence="2">
    <location>
        <begin position="169"/>
        <end position="176"/>
    </location>
    <ligand>
        <name>ATP</name>
        <dbReference type="ChEBI" id="CHEBI:30616"/>
    </ligand>
</feature>
<feature type="site" description="Required for activity" evidence="2">
    <location>
        <position position="371"/>
    </location>
</feature>
<sequence length="510" mass="55296">MDIRAAEISAILKDQIKNFGQEAEVTEVGQVLSVGDGIARVYGLDNVQAGEMVEFENGTRGMALNLETDNVGIVIFGADREIKEGQTVKRTRAIVDTPVGKGLLGRVVDALGNPIDGKGPIQSTERKRVDVKAPGIIPRKSVNEPMATGLKAIDALIPVGRGQRELIIGDRQTGKTAIALDTILNQKPLNVEGAPEGQKLYCVYVAIGQKRSTVAQFVKVLEEQGALEYSIVVAATASDPAPMQYIAPFTGCTMGEYFRDNGMHAVIIYDDLSKQAVAYRQMSLLLRRPPGREAYPGDVFYLHSRLLERAAKLNEDHGSGSLTALPIIETQANDVSAYIPTNVISITDGQIFLETDLFFQGIRPAVNVGLSVSRVGSSAQTKAMKKVAGKIKGELAQYREMAAFAQFGSDLDASTQRLLNRGSRLTELLKQPQFSPLKMEEQVVVIYAGVNGYLDPLPVSKVRAFEDGLLSLLRGKNVEILNTIRDSRDLSNETAAQLKSVVEGYAKTFA</sequence>
<gene>
    <name evidence="2" type="primary">atpA</name>
    <name type="ordered locus">RPC_0176</name>
</gene>
<dbReference type="EC" id="7.1.2.2" evidence="2"/>
<dbReference type="EMBL" id="CP000301">
    <property type="protein sequence ID" value="ABD85751.1"/>
    <property type="molecule type" value="Genomic_DNA"/>
</dbReference>
<dbReference type="SMR" id="Q21CY5"/>
<dbReference type="STRING" id="316056.RPC_0176"/>
<dbReference type="KEGG" id="rpc:RPC_0176"/>
<dbReference type="eggNOG" id="COG0056">
    <property type="taxonomic scope" value="Bacteria"/>
</dbReference>
<dbReference type="HOGENOM" id="CLU_010091_2_1_5"/>
<dbReference type="OrthoDB" id="9803053at2"/>
<dbReference type="GO" id="GO:0005886">
    <property type="term" value="C:plasma membrane"/>
    <property type="evidence" value="ECO:0007669"/>
    <property type="project" value="UniProtKB-SubCell"/>
</dbReference>
<dbReference type="GO" id="GO:0045259">
    <property type="term" value="C:proton-transporting ATP synthase complex"/>
    <property type="evidence" value="ECO:0007669"/>
    <property type="project" value="UniProtKB-KW"/>
</dbReference>
<dbReference type="GO" id="GO:0043531">
    <property type="term" value="F:ADP binding"/>
    <property type="evidence" value="ECO:0007669"/>
    <property type="project" value="TreeGrafter"/>
</dbReference>
<dbReference type="GO" id="GO:0005524">
    <property type="term" value="F:ATP binding"/>
    <property type="evidence" value="ECO:0007669"/>
    <property type="project" value="UniProtKB-UniRule"/>
</dbReference>
<dbReference type="GO" id="GO:0046933">
    <property type="term" value="F:proton-transporting ATP synthase activity, rotational mechanism"/>
    <property type="evidence" value="ECO:0007669"/>
    <property type="project" value="UniProtKB-UniRule"/>
</dbReference>
<dbReference type="CDD" id="cd18113">
    <property type="entry name" value="ATP-synt_F1_alpha_C"/>
    <property type="match status" value="1"/>
</dbReference>
<dbReference type="CDD" id="cd18116">
    <property type="entry name" value="ATP-synt_F1_alpha_N"/>
    <property type="match status" value="1"/>
</dbReference>
<dbReference type="CDD" id="cd01132">
    <property type="entry name" value="F1-ATPase_alpha_CD"/>
    <property type="match status" value="1"/>
</dbReference>
<dbReference type="FunFam" id="1.20.150.20:FF:000001">
    <property type="entry name" value="ATP synthase subunit alpha"/>
    <property type="match status" value="1"/>
</dbReference>
<dbReference type="FunFam" id="2.40.30.20:FF:000001">
    <property type="entry name" value="ATP synthase subunit alpha"/>
    <property type="match status" value="1"/>
</dbReference>
<dbReference type="FunFam" id="3.40.50.300:FF:002432">
    <property type="entry name" value="ATP synthase subunit alpha, mitochondrial"/>
    <property type="match status" value="1"/>
</dbReference>
<dbReference type="Gene3D" id="2.40.30.20">
    <property type="match status" value="1"/>
</dbReference>
<dbReference type="Gene3D" id="1.20.150.20">
    <property type="entry name" value="ATP synthase alpha/beta chain, C-terminal domain"/>
    <property type="match status" value="1"/>
</dbReference>
<dbReference type="Gene3D" id="3.40.50.300">
    <property type="entry name" value="P-loop containing nucleotide triphosphate hydrolases"/>
    <property type="match status" value="1"/>
</dbReference>
<dbReference type="HAMAP" id="MF_01346">
    <property type="entry name" value="ATP_synth_alpha_bact"/>
    <property type="match status" value="1"/>
</dbReference>
<dbReference type="InterPro" id="IPR023366">
    <property type="entry name" value="ATP_synth_asu-like_sf"/>
</dbReference>
<dbReference type="InterPro" id="IPR000793">
    <property type="entry name" value="ATP_synth_asu_C"/>
</dbReference>
<dbReference type="InterPro" id="IPR038376">
    <property type="entry name" value="ATP_synth_asu_C_sf"/>
</dbReference>
<dbReference type="InterPro" id="IPR033732">
    <property type="entry name" value="ATP_synth_F1_a_nt-bd_dom"/>
</dbReference>
<dbReference type="InterPro" id="IPR005294">
    <property type="entry name" value="ATP_synth_F1_asu"/>
</dbReference>
<dbReference type="InterPro" id="IPR020003">
    <property type="entry name" value="ATPase_a/bsu_AS"/>
</dbReference>
<dbReference type="InterPro" id="IPR004100">
    <property type="entry name" value="ATPase_F1/V1/A1_a/bsu_N"/>
</dbReference>
<dbReference type="InterPro" id="IPR036121">
    <property type="entry name" value="ATPase_F1/V1/A1_a/bsu_N_sf"/>
</dbReference>
<dbReference type="InterPro" id="IPR000194">
    <property type="entry name" value="ATPase_F1/V1/A1_a/bsu_nucl-bd"/>
</dbReference>
<dbReference type="InterPro" id="IPR027417">
    <property type="entry name" value="P-loop_NTPase"/>
</dbReference>
<dbReference type="NCBIfam" id="TIGR00962">
    <property type="entry name" value="atpA"/>
    <property type="match status" value="1"/>
</dbReference>
<dbReference type="NCBIfam" id="NF009884">
    <property type="entry name" value="PRK13343.1"/>
    <property type="match status" value="1"/>
</dbReference>
<dbReference type="PANTHER" id="PTHR48082">
    <property type="entry name" value="ATP SYNTHASE SUBUNIT ALPHA, MITOCHONDRIAL"/>
    <property type="match status" value="1"/>
</dbReference>
<dbReference type="PANTHER" id="PTHR48082:SF2">
    <property type="entry name" value="ATP SYNTHASE SUBUNIT ALPHA, MITOCHONDRIAL"/>
    <property type="match status" value="1"/>
</dbReference>
<dbReference type="Pfam" id="PF00006">
    <property type="entry name" value="ATP-synt_ab"/>
    <property type="match status" value="1"/>
</dbReference>
<dbReference type="Pfam" id="PF00306">
    <property type="entry name" value="ATP-synt_ab_C"/>
    <property type="match status" value="1"/>
</dbReference>
<dbReference type="Pfam" id="PF02874">
    <property type="entry name" value="ATP-synt_ab_N"/>
    <property type="match status" value="1"/>
</dbReference>
<dbReference type="PIRSF" id="PIRSF039088">
    <property type="entry name" value="F_ATPase_subunit_alpha"/>
    <property type="match status" value="1"/>
</dbReference>
<dbReference type="SUPFAM" id="SSF47917">
    <property type="entry name" value="C-terminal domain of alpha and beta subunits of F1 ATP synthase"/>
    <property type="match status" value="1"/>
</dbReference>
<dbReference type="SUPFAM" id="SSF50615">
    <property type="entry name" value="N-terminal domain of alpha and beta subunits of F1 ATP synthase"/>
    <property type="match status" value="1"/>
</dbReference>
<dbReference type="SUPFAM" id="SSF52540">
    <property type="entry name" value="P-loop containing nucleoside triphosphate hydrolases"/>
    <property type="match status" value="1"/>
</dbReference>
<dbReference type="PROSITE" id="PS00152">
    <property type="entry name" value="ATPASE_ALPHA_BETA"/>
    <property type="match status" value="1"/>
</dbReference>
<protein>
    <recommendedName>
        <fullName evidence="2">ATP synthase subunit alpha</fullName>
        <ecNumber evidence="2">7.1.2.2</ecNumber>
    </recommendedName>
    <alternativeName>
        <fullName evidence="2">ATP synthase F1 sector subunit alpha</fullName>
    </alternativeName>
    <alternativeName>
        <fullName evidence="2">F-ATPase subunit alpha</fullName>
    </alternativeName>
</protein>
<reference key="1">
    <citation type="submission" date="2006-03" db="EMBL/GenBank/DDBJ databases">
        <title>Complete sequence of Rhodopseudomonas palustris BisB18.</title>
        <authorList>
            <consortium name="US DOE Joint Genome Institute"/>
            <person name="Copeland A."/>
            <person name="Lucas S."/>
            <person name="Lapidus A."/>
            <person name="Barry K."/>
            <person name="Detter J.C."/>
            <person name="Glavina del Rio T."/>
            <person name="Hammon N."/>
            <person name="Israni S."/>
            <person name="Dalin E."/>
            <person name="Tice H."/>
            <person name="Pitluck S."/>
            <person name="Chain P."/>
            <person name="Malfatti S."/>
            <person name="Shin M."/>
            <person name="Vergez L."/>
            <person name="Schmutz J."/>
            <person name="Larimer F."/>
            <person name="Land M."/>
            <person name="Hauser L."/>
            <person name="Pelletier D.A."/>
            <person name="Kyrpides N."/>
            <person name="Anderson I."/>
            <person name="Oda Y."/>
            <person name="Harwood C.S."/>
            <person name="Richardson P."/>
        </authorList>
    </citation>
    <scope>NUCLEOTIDE SEQUENCE [LARGE SCALE GENOMIC DNA]</scope>
    <source>
        <strain>BisB18</strain>
    </source>
</reference>